<sequence length="138" mass="16225">MRVTQGTFCYLPDLTDEQIRKQIQYAINQGWAVSVEYTDDPHPRNSYWEMWGLPLFDVKDPATIMFEVQECRKQFPNHYIKVLAFNSTKGIESTALSFIVNRPANEPGFVLRRIESNDRVQRYQIHSYATEKPEGSRY</sequence>
<protein>
    <recommendedName>
        <fullName evidence="1">Ribulose bisphosphate carboxylase small subunit</fullName>
        <shortName evidence="1">RuBisCO small subunit</shortName>
    </recommendedName>
</protein>
<comment type="function">
    <text evidence="1">RuBisCO catalyzes two reactions: the carboxylation of D-ribulose 1,5-bisphosphate, the primary event in carbon dioxide fixation, as well as the oxidative fragmentation of the pentose substrate in the photorespiration process. Both reactions occur simultaneously and in competition at the same active site. Although the small subunit is not catalytic it is essential for maximal activity.</text>
</comment>
<comment type="subunit">
    <text evidence="1">Heterohexadecamer of 8 large and 8 small subunits.</text>
</comment>
<comment type="subcellular location">
    <subcellularLocation>
        <location evidence="1">Plastid</location>
        <location evidence="1">Chloroplast</location>
    </subcellularLocation>
</comment>
<comment type="miscellaneous">
    <text>In this alga, in contrast to plants, the small subunit is encoded in the chloroplast.</text>
</comment>
<comment type="miscellaneous">
    <text evidence="1">The basic functional RuBisCO is composed of a large chain homodimer in a 'head-to-tail' conformation. In form I RuBisCO this homodimer is arranged in a barrel-like tetramer with the small subunits forming a tetrameric 'cap' on each end of the 'barrel'.</text>
</comment>
<comment type="similarity">
    <text evidence="1">Belongs to the RuBisCO small chain family.</text>
</comment>
<feature type="chain" id="PRO_0000198593" description="Ribulose bisphosphate carboxylase small subunit">
    <location>
        <begin position="1"/>
        <end position="138"/>
    </location>
</feature>
<reference key="1">
    <citation type="journal article" date="1997" name="J. Plant Res.">
        <title>Analysis of a plastid gene cluster reveals a close relationship between Cyanidioschyzon and Cyanidium.</title>
        <authorList>
            <person name="Ohta N."/>
            <person name="Sato N."/>
            <person name="Ueda K."/>
            <person name="Kuroiwa T."/>
        </authorList>
    </citation>
    <scope>NUCLEOTIDE SEQUENCE [GENOMIC DNA]</scope>
</reference>
<reference key="2">
    <citation type="journal article" date="2003" name="DNA Res.">
        <title>Complete sequence and analysis of the plastid genome of the unicellular red alga Cyanidioschyzon merolae.</title>
        <authorList>
            <person name="Ohta N."/>
            <person name="Matsuzaki M."/>
            <person name="Misumi O."/>
            <person name="Miyagishima S.-Y."/>
            <person name="Nozaki H."/>
            <person name="Tanaka K."/>
            <person name="Shin-i T."/>
            <person name="Kohara Y."/>
            <person name="Kuroiwa T."/>
        </authorList>
    </citation>
    <scope>NUCLEOTIDE SEQUENCE [LARGE SCALE GENOMIC DNA]</scope>
    <source>
        <strain>NIES-3377 / 10D</strain>
    </source>
</reference>
<organism>
    <name type="scientific">Cyanidioschyzon merolae (strain NIES-3377 / 10D)</name>
    <name type="common">Unicellular red alga</name>
    <dbReference type="NCBI Taxonomy" id="280699"/>
    <lineage>
        <taxon>Eukaryota</taxon>
        <taxon>Rhodophyta</taxon>
        <taxon>Bangiophyceae</taxon>
        <taxon>Cyanidiales</taxon>
        <taxon>Cyanidiaceae</taxon>
        <taxon>Cyanidioschyzon</taxon>
    </lineage>
</organism>
<keyword id="KW-0113">Calvin cycle</keyword>
<keyword id="KW-0120">Carbon dioxide fixation</keyword>
<keyword id="KW-0150">Chloroplast</keyword>
<keyword id="KW-0601">Photorespiration</keyword>
<keyword id="KW-0602">Photosynthesis</keyword>
<keyword id="KW-0934">Plastid</keyword>
<keyword id="KW-1185">Reference proteome</keyword>
<accession>O22024</accession>
<geneLocation type="chloroplast"/>
<proteinExistence type="inferred from homology"/>
<dbReference type="EMBL" id="D63675">
    <property type="protein sequence ID" value="BAA22820.1"/>
    <property type="molecule type" value="Genomic_DNA"/>
</dbReference>
<dbReference type="EMBL" id="AB002583">
    <property type="protein sequence ID" value="BAC76108.1"/>
    <property type="molecule type" value="Genomic_DNA"/>
</dbReference>
<dbReference type="RefSeq" id="NP_848946.1">
    <property type="nucleotide sequence ID" value="NC_004799.1"/>
</dbReference>
<dbReference type="SMR" id="O22024"/>
<dbReference type="STRING" id="280699.O22024"/>
<dbReference type="EnsemblPlants" id="CMV014CT">
    <property type="protein sequence ID" value="CMV014CT"/>
    <property type="gene ID" value="CMV014C"/>
</dbReference>
<dbReference type="GeneID" id="844965"/>
<dbReference type="Gramene" id="CMV014CT">
    <property type="protein sequence ID" value="CMV014CT"/>
    <property type="gene ID" value="CMV014C"/>
</dbReference>
<dbReference type="KEGG" id="cme:CymeCp014"/>
<dbReference type="eggNOG" id="ENOG502QTPB">
    <property type="taxonomic scope" value="Eukaryota"/>
</dbReference>
<dbReference type="HOGENOM" id="CLU_098114_2_0_1"/>
<dbReference type="Proteomes" id="UP000007014">
    <property type="component" value="Chloroplast"/>
</dbReference>
<dbReference type="GO" id="GO:0009507">
    <property type="term" value="C:chloroplast"/>
    <property type="evidence" value="ECO:0007669"/>
    <property type="project" value="UniProtKB-SubCell"/>
</dbReference>
<dbReference type="GO" id="GO:0016984">
    <property type="term" value="F:ribulose-bisphosphate carboxylase activity"/>
    <property type="evidence" value="ECO:0007669"/>
    <property type="project" value="UniProtKB-UniRule"/>
</dbReference>
<dbReference type="GO" id="GO:0019253">
    <property type="term" value="P:reductive pentose-phosphate cycle"/>
    <property type="evidence" value="ECO:0007669"/>
    <property type="project" value="UniProtKB-UniRule"/>
</dbReference>
<dbReference type="CDD" id="cd03527">
    <property type="entry name" value="RuBisCO_small"/>
    <property type="match status" value="1"/>
</dbReference>
<dbReference type="Gene3D" id="3.30.190.10">
    <property type="entry name" value="Ribulose bisphosphate carboxylase, small subunit"/>
    <property type="match status" value="1"/>
</dbReference>
<dbReference type="HAMAP" id="MF_00859">
    <property type="entry name" value="RuBisCO_S_bact"/>
    <property type="match status" value="1"/>
</dbReference>
<dbReference type="InterPro" id="IPR024681">
    <property type="entry name" value="RuBisCO_ssu"/>
</dbReference>
<dbReference type="InterPro" id="IPR000894">
    <property type="entry name" value="RuBisCO_ssu_dom"/>
</dbReference>
<dbReference type="InterPro" id="IPR036385">
    <property type="entry name" value="RuBisCO_ssu_sf"/>
</dbReference>
<dbReference type="PANTHER" id="PTHR31262">
    <property type="entry name" value="RIBULOSE BISPHOSPHATE CARBOXYLASE SMALL CHAIN 1, CHLOROPLASTIC"/>
    <property type="match status" value="1"/>
</dbReference>
<dbReference type="PANTHER" id="PTHR31262:SF23">
    <property type="entry name" value="RIBULOSE BISPHOSPHATE CARBOXYLASE SMALL SUBUNIT"/>
    <property type="match status" value="1"/>
</dbReference>
<dbReference type="Pfam" id="PF00101">
    <property type="entry name" value="RuBisCO_small"/>
    <property type="match status" value="1"/>
</dbReference>
<dbReference type="SMART" id="SM00961">
    <property type="entry name" value="RuBisCO_small"/>
    <property type="match status" value="1"/>
</dbReference>
<dbReference type="SUPFAM" id="SSF55239">
    <property type="entry name" value="RuBisCO, small subunit"/>
    <property type="match status" value="1"/>
</dbReference>
<evidence type="ECO:0000255" key="1">
    <source>
        <dbReference type="HAMAP-Rule" id="MF_00859"/>
    </source>
</evidence>
<name>RBS_CYAM1</name>
<gene>
    <name evidence="1" type="primary">rbcS</name>
</gene>